<feature type="chain" id="PRO_1000138387" description="Flap endonuclease Xni">
    <location>
        <begin position="1"/>
        <end position="251"/>
    </location>
</feature>
<feature type="domain" description="5'-3' exonuclease" evidence="1">
    <location>
        <begin position="160"/>
        <end position="249"/>
    </location>
</feature>
<feature type="region of interest" description="Interaction with DNA" evidence="1">
    <location>
        <begin position="184"/>
        <end position="189"/>
    </location>
</feature>
<feature type="binding site" evidence="1">
    <location>
        <position position="104"/>
    </location>
    <ligand>
        <name>Mg(2+)</name>
        <dbReference type="ChEBI" id="CHEBI:18420"/>
    </ligand>
</feature>
<feature type="binding site" evidence="1">
    <location>
        <position position="171"/>
    </location>
    <ligand>
        <name>K(+)</name>
        <dbReference type="ChEBI" id="CHEBI:29103"/>
    </ligand>
</feature>
<feature type="binding site" evidence="1">
    <location>
        <position position="172"/>
    </location>
    <ligand>
        <name>K(+)</name>
        <dbReference type="ChEBI" id="CHEBI:29103"/>
    </ligand>
</feature>
<feature type="binding site" evidence="1">
    <location>
        <position position="180"/>
    </location>
    <ligand>
        <name>K(+)</name>
        <dbReference type="ChEBI" id="CHEBI:29103"/>
    </ligand>
</feature>
<feature type="binding site" evidence="1">
    <location>
        <position position="182"/>
    </location>
    <ligand>
        <name>K(+)</name>
        <dbReference type="ChEBI" id="CHEBI:29103"/>
    </ligand>
</feature>
<feature type="binding site" evidence="1">
    <location>
        <position position="185"/>
    </location>
    <ligand>
        <name>K(+)</name>
        <dbReference type="ChEBI" id="CHEBI:29103"/>
    </ligand>
</feature>
<accession>B5FTX5</accession>
<proteinExistence type="inferred from homology"/>
<protein>
    <recommendedName>
        <fullName evidence="1">Flap endonuclease Xni</fullName>
        <shortName evidence="1">FEN</shortName>
        <ecNumber evidence="1">3.1.-.-</ecNumber>
    </recommendedName>
</protein>
<dbReference type="EC" id="3.1.-.-" evidence="1"/>
<dbReference type="EMBL" id="CP001144">
    <property type="protein sequence ID" value="ACH73692.1"/>
    <property type="molecule type" value="Genomic_DNA"/>
</dbReference>
<dbReference type="RefSeq" id="WP_001574919.1">
    <property type="nucleotide sequence ID" value="NC_011205.1"/>
</dbReference>
<dbReference type="SMR" id="B5FTX5"/>
<dbReference type="KEGG" id="sed:SeD_A3295"/>
<dbReference type="HOGENOM" id="CLU_004675_1_2_6"/>
<dbReference type="Proteomes" id="UP000008322">
    <property type="component" value="Chromosome"/>
</dbReference>
<dbReference type="GO" id="GO:0008409">
    <property type="term" value="F:5'-3' exonuclease activity"/>
    <property type="evidence" value="ECO:0007669"/>
    <property type="project" value="InterPro"/>
</dbReference>
<dbReference type="GO" id="GO:0017108">
    <property type="term" value="F:5'-flap endonuclease activity"/>
    <property type="evidence" value="ECO:0007669"/>
    <property type="project" value="UniProtKB-UniRule"/>
</dbReference>
<dbReference type="GO" id="GO:0003677">
    <property type="term" value="F:DNA binding"/>
    <property type="evidence" value="ECO:0007669"/>
    <property type="project" value="UniProtKB-UniRule"/>
</dbReference>
<dbReference type="GO" id="GO:0000287">
    <property type="term" value="F:magnesium ion binding"/>
    <property type="evidence" value="ECO:0007669"/>
    <property type="project" value="UniProtKB-UniRule"/>
</dbReference>
<dbReference type="GO" id="GO:0030955">
    <property type="term" value="F:potassium ion binding"/>
    <property type="evidence" value="ECO:0007669"/>
    <property type="project" value="UniProtKB-UniRule"/>
</dbReference>
<dbReference type="GO" id="GO:0033567">
    <property type="term" value="P:DNA replication, Okazaki fragment processing"/>
    <property type="evidence" value="ECO:0007669"/>
    <property type="project" value="UniProtKB-UniRule"/>
</dbReference>
<dbReference type="CDD" id="cd09898">
    <property type="entry name" value="H3TH_53EXO"/>
    <property type="match status" value="1"/>
</dbReference>
<dbReference type="CDD" id="cd09859">
    <property type="entry name" value="PIN_53EXO"/>
    <property type="match status" value="1"/>
</dbReference>
<dbReference type="FunFam" id="1.10.150.20:FF:000003">
    <property type="entry name" value="DNA polymerase I"/>
    <property type="match status" value="1"/>
</dbReference>
<dbReference type="FunFam" id="3.40.50.1010:FF:000011">
    <property type="entry name" value="Flap endonuclease Xni"/>
    <property type="match status" value="1"/>
</dbReference>
<dbReference type="Gene3D" id="1.10.150.20">
    <property type="entry name" value="5' to 3' exonuclease, C-terminal subdomain"/>
    <property type="match status" value="1"/>
</dbReference>
<dbReference type="Gene3D" id="3.40.50.1010">
    <property type="entry name" value="5'-nuclease"/>
    <property type="match status" value="1"/>
</dbReference>
<dbReference type="HAMAP" id="MF_01192">
    <property type="entry name" value="Xni"/>
    <property type="match status" value="1"/>
</dbReference>
<dbReference type="InterPro" id="IPR020046">
    <property type="entry name" value="5-3_exonucl_a-hlix_arch_N"/>
</dbReference>
<dbReference type="InterPro" id="IPR002421">
    <property type="entry name" value="5-3_exonuclease"/>
</dbReference>
<dbReference type="InterPro" id="IPR036279">
    <property type="entry name" value="5-3_exonuclease_C_sf"/>
</dbReference>
<dbReference type="InterPro" id="IPR020045">
    <property type="entry name" value="DNA_polI_H3TH"/>
</dbReference>
<dbReference type="InterPro" id="IPR038969">
    <property type="entry name" value="FEN"/>
</dbReference>
<dbReference type="InterPro" id="IPR008918">
    <property type="entry name" value="HhH2"/>
</dbReference>
<dbReference type="InterPro" id="IPR029060">
    <property type="entry name" value="PIN-like_dom_sf"/>
</dbReference>
<dbReference type="InterPro" id="IPR022895">
    <property type="entry name" value="Xni"/>
</dbReference>
<dbReference type="NCBIfam" id="NF007017">
    <property type="entry name" value="PRK09482.1"/>
    <property type="match status" value="1"/>
</dbReference>
<dbReference type="PANTHER" id="PTHR42646:SF2">
    <property type="entry name" value="5'-3' EXONUCLEASE FAMILY PROTEIN"/>
    <property type="match status" value="1"/>
</dbReference>
<dbReference type="PANTHER" id="PTHR42646">
    <property type="entry name" value="FLAP ENDONUCLEASE XNI"/>
    <property type="match status" value="1"/>
</dbReference>
<dbReference type="Pfam" id="PF01367">
    <property type="entry name" value="5_3_exonuc"/>
    <property type="match status" value="1"/>
</dbReference>
<dbReference type="Pfam" id="PF02739">
    <property type="entry name" value="5_3_exonuc_N"/>
    <property type="match status" value="1"/>
</dbReference>
<dbReference type="SMART" id="SM00475">
    <property type="entry name" value="53EXOc"/>
    <property type="match status" value="1"/>
</dbReference>
<dbReference type="SMART" id="SM00279">
    <property type="entry name" value="HhH2"/>
    <property type="match status" value="1"/>
</dbReference>
<dbReference type="SUPFAM" id="SSF47807">
    <property type="entry name" value="5' to 3' exonuclease, C-terminal subdomain"/>
    <property type="match status" value="1"/>
</dbReference>
<dbReference type="SUPFAM" id="SSF88723">
    <property type="entry name" value="PIN domain-like"/>
    <property type="match status" value="1"/>
</dbReference>
<organism>
    <name type="scientific">Salmonella dublin (strain CT_02021853)</name>
    <dbReference type="NCBI Taxonomy" id="439851"/>
    <lineage>
        <taxon>Bacteria</taxon>
        <taxon>Pseudomonadati</taxon>
        <taxon>Pseudomonadota</taxon>
        <taxon>Gammaproteobacteria</taxon>
        <taxon>Enterobacterales</taxon>
        <taxon>Enterobacteriaceae</taxon>
        <taxon>Salmonella</taxon>
    </lineage>
</organism>
<sequence>MAAHLLIVDALNLIRRIHAVQGSPCVETCQHALDQLIIHSQPTHAVAVFDDDARSSGWRHQRLPDYKAGRPPMPDDLHNEMPALRAAFEQRGIRCWASDGNEADDLAATLALKVTEAGHQATIVSTDKGYCQLLSPGLRIRDYFQKRWLDAPFIEKEFGVLPRQLPDYWGLAGISSSKVPGVAGIGPKSATQLLIQFQNLEGIYAHLDEVPEKWRKKLETHKEMAFLCRDIARLQTDLHIDGNLQQLRLAR</sequence>
<name>XNI_SALDC</name>
<reference key="1">
    <citation type="journal article" date="2011" name="J. Bacteriol.">
        <title>Comparative genomics of 28 Salmonella enterica isolates: evidence for CRISPR-mediated adaptive sublineage evolution.</title>
        <authorList>
            <person name="Fricke W.F."/>
            <person name="Mammel M.K."/>
            <person name="McDermott P.F."/>
            <person name="Tartera C."/>
            <person name="White D.G."/>
            <person name="Leclerc J.E."/>
            <person name="Ravel J."/>
            <person name="Cebula T.A."/>
        </authorList>
    </citation>
    <scope>NUCLEOTIDE SEQUENCE [LARGE SCALE GENOMIC DNA]</scope>
    <source>
        <strain>CT_02021853</strain>
    </source>
</reference>
<comment type="function">
    <text evidence="1">Has flap endonuclease activity. During DNA replication, flap endonucleases cleave the 5'-overhanging flap structure that is generated by displacement synthesis when DNA polymerase encounters the 5'-end of a downstream Okazaki fragment.</text>
</comment>
<comment type="cofactor">
    <cofactor evidence="1">
        <name>Mg(2+)</name>
        <dbReference type="ChEBI" id="CHEBI:18420"/>
    </cofactor>
    <text evidence="1">Binds 2 Mg(2+) per subunit. Only one magnesium ion has a direct interaction with the protein, the other interactions are indirect.</text>
</comment>
<comment type="cofactor">
    <cofactor evidence="1">
        <name>K(+)</name>
        <dbReference type="ChEBI" id="CHEBI:29103"/>
    </cofactor>
    <text evidence="1">Binds 1 K(+) per subunit. The potassium ion strongly increases the affinity for DNA.</text>
</comment>
<comment type="similarity">
    <text evidence="1">Belongs to the Xni family.</text>
</comment>
<evidence type="ECO:0000255" key="1">
    <source>
        <dbReference type="HAMAP-Rule" id="MF_01192"/>
    </source>
</evidence>
<keyword id="KW-0238">DNA-binding</keyword>
<keyword id="KW-0255">Endonuclease</keyword>
<keyword id="KW-0378">Hydrolase</keyword>
<keyword id="KW-0460">Magnesium</keyword>
<keyword id="KW-0479">Metal-binding</keyword>
<keyword id="KW-0540">Nuclease</keyword>
<keyword id="KW-0630">Potassium</keyword>
<gene>
    <name evidence="1" type="primary">xni</name>
    <name evidence="1" type="synonym">ygdG</name>
    <name type="ordered locus">SeD_A3295</name>
</gene>